<dbReference type="EC" id="2.7.4.23" evidence="1"/>
<dbReference type="EMBL" id="AE017223">
    <property type="protein sequence ID" value="AAX74446.1"/>
    <property type="molecule type" value="Genomic_DNA"/>
</dbReference>
<dbReference type="RefSeq" id="WP_002969545.1">
    <property type="nucleotide sequence ID" value="NC_006932.1"/>
</dbReference>
<dbReference type="SMR" id="Q57D38"/>
<dbReference type="EnsemblBacteria" id="AAX74446">
    <property type="protein sequence ID" value="AAX74446"/>
    <property type="gene ID" value="BruAb1_1105"/>
</dbReference>
<dbReference type="GeneID" id="93016560"/>
<dbReference type="KEGG" id="bmb:BruAb1_1105"/>
<dbReference type="HOGENOM" id="CLU_102477_0_0_5"/>
<dbReference type="UniPathway" id="UPA00087">
    <property type="reaction ID" value="UER00175"/>
</dbReference>
<dbReference type="Proteomes" id="UP000000540">
    <property type="component" value="Chromosome I"/>
</dbReference>
<dbReference type="GO" id="GO:0005829">
    <property type="term" value="C:cytosol"/>
    <property type="evidence" value="ECO:0007669"/>
    <property type="project" value="TreeGrafter"/>
</dbReference>
<dbReference type="GO" id="GO:0005524">
    <property type="term" value="F:ATP binding"/>
    <property type="evidence" value="ECO:0007669"/>
    <property type="project" value="UniProtKB-KW"/>
</dbReference>
<dbReference type="GO" id="GO:0033863">
    <property type="term" value="F:ribose 1,5-bisphosphate phosphokinase activity"/>
    <property type="evidence" value="ECO:0007669"/>
    <property type="project" value="UniProtKB-UniRule"/>
</dbReference>
<dbReference type="GO" id="GO:0006015">
    <property type="term" value="P:5-phosphoribose 1-diphosphate biosynthetic process"/>
    <property type="evidence" value="ECO:0007669"/>
    <property type="project" value="UniProtKB-UniRule"/>
</dbReference>
<dbReference type="GO" id="GO:0019634">
    <property type="term" value="P:organic phosphonate metabolic process"/>
    <property type="evidence" value="ECO:0007669"/>
    <property type="project" value="UniProtKB-UniRule"/>
</dbReference>
<dbReference type="Gene3D" id="3.40.50.300">
    <property type="entry name" value="P-loop containing nucleotide triphosphate hydrolases"/>
    <property type="match status" value="1"/>
</dbReference>
<dbReference type="HAMAP" id="MF_00836">
    <property type="entry name" value="PhnN"/>
    <property type="match status" value="1"/>
</dbReference>
<dbReference type="InterPro" id="IPR008145">
    <property type="entry name" value="GK/Ca_channel_bsu"/>
</dbReference>
<dbReference type="InterPro" id="IPR027417">
    <property type="entry name" value="P-loop_NTPase"/>
</dbReference>
<dbReference type="InterPro" id="IPR012699">
    <property type="entry name" value="PhnN"/>
</dbReference>
<dbReference type="NCBIfam" id="TIGR02322">
    <property type="entry name" value="phosphon_PhnN"/>
    <property type="match status" value="1"/>
</dbReference>
<dbReference type="PANTHER" id="PTHR23117">
    <property type="entry name" value="GUANYLATE KINASE-RELATED"/>
    <property type="match status" value="1"/>
</dbReference>
<dbReference type="PANTHER" id="PTHR23117:SF8">
    <property type="entry name" value="RIBOSE 1,5-BISPHOSPHATE PHOSPHOKINASE PHNN"/>
    <property type="match status" value="1"/>
</dbReference>
<dbReference type="SMART" id="SM00072">
    <property type="entry name" value="GuKc"/>
    <property type="match status" value="1"/>
</dbReference>
<dbReference type="SUPFAM" id="SSF52540">
    <property type="entry name" value="P-loop containing nucleoside triphosphate hydrolases"/>
    <property type="match status" value="1"/>
</dbReference>
<name>PHNN_BRUAB</name>
<protein>
    <recommendedName>
        <fullName evidence="1">Ribose 1,5-bisphosphate phosphokinase PhnN</fullName>
        <ecNumber evidence="1">2.7.4.23</ecNumber>
    </recommendedName>
    <alternativeName>
        <fullName evidence="1">Ribose 1,5-bisphosphokinase</fullName>
    </alternativeName>
</protein>
<proteinExistence type="inferred from homology"/>
<keyword id="KW-0067">ATP-binding</keyword>
<keyword id="KW-0547">Nucleotide-binding</keyword>
<keyword id="KW-0808">Transferase</keyword>
<feature type="chain" id="PRO_0000412774" description="Ribose 1,5-bisphosphate phosphokinase PhnN">
    <location>
        <begin position="1"/>
        <end position="192"/>
    </location>
</feature>
<feature type="binding site" evidence="1">
    <location>
        <begin position="15"/>
        <end position="22"/>
    </location>
    <ligand>
        <name>ATP</name>
        <dbReference type="ChEBI" id="CHEBI:30616"/>
    </ligand>
</feature>
<evidence type="ECO:0000255" key="1">
    <source>
        <dbReference type="HAMAP-Rule" id="MF_00836"/>
    </source>
</evidence>
<reference key="1">
    <citation type="journal article" date="2005" name="J. Bacteriol.">
        <title>Completion of the genome sequence of Brucella abortus and comparison to the highly similar genomes of Brucella melitensis and Brucella suis.</title>
        <authorList>
            <person name="Halling S.M."/>
            <person name="Peterson-Burch B.D."/>
            <person name="Bricker B.J."/>
            <person name="Zuerner R.L."/>
            <person name="Qing Z."/>
            <person name="Li L.-L."/>
            <person name="Kapur V."/>
            <person name="Alt D.P."/>
            <person name="Olsen S.C."/>
        </authorList>
    </citation>
    <scope>NUCLEOTIDE SEQUENCE [LARGE SCALE GENOMIC DNA]</scope>
    <source>
        <strain>9-941</strain>
    </source>
</reference>
<comment type="function">
    <text evidence="1">Catalyzes the phosphorylation of ribose 1,5-bisphosphate to 5-phospho-D-ribosyl alpha-1-diphosphate (PRPP).</text>
</comment>
<comment type="catalytic activity">
    <reaction evidence="1">
        <text>alpha-D-ribose 1,5-bisphosphate + ATP = 5-phospho-alpha-D-ribose 1-diphosphate + ADP</text>
        <dbReference type="Rhea" id="RHEA:20109"/>
        <dbReference type="ChEBI" id="CHEBI:30616"/>
        <dbReference type="ChEBI" id="CHEBI:58017"/>
        <dbReference type="ChEBI" id="CHEBI:68688"/>
        <dbReference type="ChEBI" id="CHEBI:456216"/>
        <dbReference type="EC" id="2.7.4.23"/>
    </reaction>
</comment>
<comment type="pathway">
    <text evidence="1">Metabolic intermediate biosynthesis; 5-phospho-alpha-D-ribose 1-diphosphate biosynthesis; 5-phospho-alpha-D-ribose 1-diphosphate from D-ribose 5-phosphate (route II): step 3/3.</text>
</comment>
<comment type="similarity">
    <text evidence="1">Belongs to the ribose 1,5-bisphosphokinase family.</text>
</comment>
<organism>
    <name type="scientific">Brucella abortus biovar 1 (strain 9-941)</name>
    <dbReference type="NCBI Taxonomy" id="262698"/>
    <lineage>
        <taxon>Bacteria</taxon>
        <taxon>Pseudomonadati</taxon>
        <taxon>Pseudomonadota</taxon>
        <taxon>Alphaproteobacteria</taxon>
        <taxon>Hyphomicrobiales</taxon>
        <taxon>Brucellaceae</taxon>
        <taxon>Brucella/Ochrobactrum group</taxon>
        <taxon>Brucella</taxon>
    </lineage>
</organism>
<accession>Q57D38</accession>
<sequence>MQADTPKGCFVAVVGPSGAGKDTIMDAARVALSGDMRFHFVRRIITRTQMPGTEDHDSLDEADFARAAGEGRFALHWQAHGLRYGLPKTLDDEIAGGAVVIANVSRRVLSDIRRLYTSRSVVVISARTEVLAQRLASRGRESREEIAARLAREVGFDDGSGDVVTIDNSGEVGASTKAFLYHLHEIAVKTIA</sequence>
<gene>
    <name evidence="1" type="primary">phnN</name>
    <name type="ordered locus">BruAb1_1105</name>
</gene>